<keyword id="KW-0002">3D-structure</keyword>
<keyword id="KW-0025">Alternative splicing</keyword>
<keyword id="KW-1003">Cell membrane</keyword>
<keyword id="KW-0966">Cell projection</keyword>
<keyword id="KW-0969">Cilium</keyword>
<keyword id="KW-0963">Cytoplasm</keyword>
<keyword id="KW-0206">Cytoskeleton</keyword>
<keyword id="KW-0282">Flagellum</keyword>
<keyword id="KW-0325">Glycoprotein</keyword>
<keyword id="KW-0472">Membrane</keyword>
<keyword id="KW-1267">Proteomics identification</keyword>
<keyword id="KW-1185">Reference proteome</keyword>
<keyword id="KW-0812">Transmembrane</keyword>
<keyword id="KW-1133">Transmembrane helix</keyword>
<reference key="1">
    <citation type="journal article" date="2004" name="Nature">
        <title>DNA sequence and analysis of human chromosome 9.</title>
        <authorList>
            <person name="Humphray S.J."/>
            <person name="Oliver K."/>
            <person name="Hunt A.R."/>
            <person name="Plumb R.W."/>
            <person name="Loveland J.E."/>
            <person name="Howe K.L."/>
            <person name="Andrews T.D."/>
            <person name="Searle S."/>
            <person name="Hunt S.E."/>
            <person name="Scott C.E."/>
            <person name="Jones M.C."/>
            <person name="Ainscough R."/>
            <person name="Almeida J.P."/>
            <person name="Ambrose K.D."/>
            <person name="Ashwell R.I.S."/>
            <person name="Babbage A.K."/>
            <person name="Babbage S."/>
            <person name="Bagguley C.L."/>
            <person name="Bailey J."/>
            <person name="Banerjee R."/>
            <person name="Barker D.J."/>
            <person name="Barlow K.F."/>
            <person name="Bates K."/>
            <person name="Beasley H."/>
            <person name="Beasley O."/>
            <person name="Bird C.P."/>
            <person name="Bray-Allen S."/>
            <person name="Brown A.J."/>
            <person name="Brown J.Y."/>
            <person name="Burford D."/>
            <person name="Burrill W."/>
            <person name="Burton J."/>
            <person name="Carder C."/>
            <person name="Carter N.P."/>
            <person name="Chapman J.C."/>
            <person name="Chen Y."/>
            <person name="Clarke G."/>
            <person name="Clark S.Y."/>
            <person name="Clee C.M."/>
            <person name="Clegg S."/>
            <person name="Collier R.E."/>
            <person name="Corby N."/>
            <person name="Crosier M."/>
            <person name="Cummings A.T."/>
            <person name="Davies J."/>
            <person name="Dhami P."/>
            <person name="Dunn M."/>
            <person name="Dutta I."/>
            <person name="Dyer L.W."/>
            <person name="Earthrowl M.E."/>
            <person name="Faulkner L."/>
            <person name="Fleming C.J."/>
            <person name="Frankish A."/>
            <person name="Frankland J.A."/>
            <person name="French L."/>
            <person name="Fricker D.G."/>
            <person name="Garner P."/>
            <person name="Garnett J."/>
            <person name="Ghori J."/>
            <person name="Gilbert J.G.R."/>
            <person name="Glison C."/>
            <person name="Grafham D.V."/>
            <person name="Gribble S."/>
            <person name="Griffiths C."/>
            <person name="Griffiths-Jones S."/>
            <person name="Grocock R."/>
            <person name="Guy J."/>
            <person name="Hall R.E."/>
            <person name="Hammond S."/>
            <person name="Harley J.L."/>
            <person name="Harrison E.S.I."/>
            <person name="Hart E.A."/>
            <person name="Heath P.D."/>
            <person name="Henderson C.D."/>
            <person name="Hopkins B.L."/>
            <person name="Howard P.J."/>
            <person name="Howden P.J."/>
            <person name="Huckle E."/>
            <person name="Johnson C."/>
            <person name="Johnson D."/>
            <person name="Joy A.A."/>
            <person name="Kay M."/>
            <person name="Keenan S."/>
            <person name="Kershaw J.K."/>
            <person name="Kimberley A.M."/>
            <person name="King A."/>
            <person name="Knights A."/>
            <person name="Laird G.K."/>
            <person name="Langford C."/>
            <person name="Lawlor S."/>
            <person name="Leongamornlert D.A."/>
            <person name="Leversha M."/>
            <person name="Lloyd C."/>
            <person name="Lloyd D.M."/>
            <person name="Lovell J."/>
            <person name="Martin S."/>
            <person name="Mashreghi-Mohammadi M."/>
            <person name="Matthews L."/>
            <person name="McLaren S."/>
            <person name="McLay K.E."/>
            <person name="McMurray A."/>
            <person name="Milne S."/>
            <person name="Nickerson T."/>
            <person name="Nisbett J."/>
            <person name="Nordsiek G."/>
            <person name="Pearce A.V."/>
            <person name="Peck A.I."/>
            <person name="Porter K.M."/>
            <person name="Pandian R."/>
            <person name="Pelan S."/>
            <person name="Phillimore B."/>
            <person name="Povey S."/>
            <person name="Ramsey Y."/>
            <person name="Rand V."/>
            <person name="Scharfe M."/>
            <person name="Sehra H.K."/>
            <person name="Shownkeen R."/>
            <person name="Sims S.K."/>
            <person name="Skuce C.D."/>
            <person name="Smith M."/>
            <person name="Steward C.A."/>
            <person name="Swarbreck D."/>
            <person name="Sycamore N."/>
            <person name="Tester J."/>
            <person name="Thorpe A."/>
            <person name="Tracey A."/>
            <person name="Tromans A."/>
            <person name="Thomas D.W."/>
            <person name="Wall M."/>
            <person name="Wallis J.M."/>
            <person name="West A.P."/>
            <person name="Whitehead S.L."/>
            <person name="Willey D.L."/>
            <person name="Williams S.A."/>
            <person name="Wilming L."/>
            <person name="Wray P.W."/>
            <person name="Young L."/>
            <person name="Ashurst J.L."/>
            <person name="Coulson A."/>
            <person name="Blocker H."/>
            <person name="Durbin R.M."/>
            <person name="Sulston J.E."/>
            <person name="Hubbard T."/>
            <person name="Jackson M.J."/>
            <person name="Bentley D.R."/>
            <person name="Beck S."/>
            <person name="Rogers J."/>
            <person name="Dunham I."/>
        </authorList>
    </citation>
    <scope>NUCLEOTIDE SEQUENCE [LARGE SCALE GENOMIC DNA]</scope>
</reference>
<reference key="2">
    <citation type="submission" date="2005-07" db="EMBL/GenBank/DDBJ databases">
        <authorList>
            <person name="Mural R.J."/>
            <person name="Istrail S."/>
            <person name="Sutton G.G."/>
            <person name="Florea L."/>
            <person name="Halpern A.L."/>
            <person name="Mobarry C.M."/>
            <person name="Lippert R."/>
            <person name="Walenz B."/>
            <person name="Shatkay H."/>
            <person name="Dew I."/>
            <person name="Miller J.R."/>
            <person name="Flanigan M.J."/>
            <person name="Edwards N.J."/>
            <person name="Bolanos R."/>
            <person name="Fasulo D."/>
            <person name="Halldorsson B.V."/>
            <person name="Hannenhalli S."/>
            <person name="Turner R."/>
            <person name="Yooseph S."/>
            <person name="Lu F."/>
            <person name="Nusskern D.R."/>
            <person name="Shue B.C."/>
            <person name="Zheng X.H."/>
            <person name="Zhong F."/>
            <person name="Delcher A.L."/>
            <person name="Huson D.H."/>
            <person name="Kravitz S.A."/>
            <person name="Mouchard L."/>
            <person name="Reinert K."/>
            <person name="Remington K.A."/>
            <person name="Clark A.G."/>
            <person name="Waterman M.S."/>
            <person name="Eichler E.E."/>
            <person name="Adams M.D."/>
            <person name="Hunkapiller M.W."/>
            <person name="Myers E.W."/>
            <person name="Venter J.C."/>
        </authorList>
    </citation>
    <scope>NUCLEOTIDE SEQUENCE [LARGE SCALE GENOMIC DNA]</scope>
</reference>
<reference key="3">
    <citation type="journal article" date="2004" name="Genome Res.">
        <title>The status, quality, and expansion of the NIH full-length cDNA project: the Mammalian Gene Collection (MGC).</title>
        <authorList>
            <consortium name="The MGC Project Team"/>
        </authorList>
    </citation>
    <scope>NUCLEOTIDE SEQUENCE [LARGE SCALE MRNA] (ISOFORMS 1 AND 2)</scope>
    <source>
        <tissue>Brain</tissue>
    </source>
</reference>
<reference key="4">
    <citation type="journal article" date="2005" name="J. Proteome Res.">
        <title>Human plasma N-glycoproteome analysis by immunoaffinity subtraction, hydrazide chemistry, and mass spectrometry.</title>
        <authorList>
            <person name="Liu T."/>
            <person name="Qian W.-J."/>
            <person name="Gritsenko M.A."/>
            <person name="Camp D.G. II"/>
            <person name="Monroe M.E."/>
            <person name="Moore R.J."/>
            <person name="Smith R.D."/>
        </authorList>
    </citation>
    <scope>GLYCOSYLATION [LARGE SCALE ANALYSIS] AT ASN-75</scope>
    <source>
        <tissue>Plasma</tissue>
    </source>
</reference>
<reference key="5">
    <citation type="journal article" date="2017" name="Sci. Rep.">
        <title>C9ORF135 encodes a membrane protein whose expression is related to pluripotency in human embryonic stem cells.</title>
        <authorList>
            <person name="Zhou S."/>
            <person name="Liu Y."/>
            <person name="Ma Y."/>
            <person name="Zhang X."/>
            <person name="Li Y."/>
            <person name="Wen J."/>
        </authorList>
    </citation>
    <scope>SUBCELLULAR LOCATION</scope>
    <scope>INTERACTION WITH MYH9 AND MYH10</scope>
    <scope>TISSUE SPECIFICITY</scope>
    <scope>INDUCTION</scope>
</reference>
<reference key="6">
    <citation type="journal article" date="2024" name="Nat. Commun.">
        <title>Uncovering structural themes across cilia microtubule inner proteins with implications for human cilia function.</title>
        <authorList>
            <person name="Andersen J.S."/>
            <person name="Vijayakumaran A."/>
            <person name="Godbehere C."/>
            <person name="Lorentzen E."/>
            <person name="Mennella V."/>
            <person name="Schou K.B."/>
        </authorList>
    </citation>
    <scope>IDENTIFICATION OF MN REGION</scope>
</reference>
<reference evidence="9" key="7">
    <citation type="journal article" date="2022" name="Proc. Natl. Acad. Sci. U.S.A.">
        <title>SPACA9 is a lumenal protein of human ciliary singlet and doublet microtubules.</title>
        <authorList>
            <person name="Gui M."/>
            <person name="Croft J.T."/>
            <person name="Zabeo D."/>
            <person name="Acharya V."/>
            <person name="Kollman J.M."/>
            <person name="Burgoyne T."/>
            <person name="Hoog J.L."/>
            <person name="Brown A."/>
        </authorList>
    </citation>
    <scope>STRUCTURE BY ELECTRON MICROSCOPY (3.60 ANGSTROMS)</scope>
    <scope>FUNCTION</scope>
    <scope>SUBCELLULAR LOCATION</scope>
    <scope>TISSUE SPECIFICITY</scope>
</reference>
<proteinExistence type="evidence at protein level"/>
<protein>
    <recommendedName>
        <fullName evidence="8">Cilia- and flagella-associated protein 95</fullName>
    </recommendedName>
</protein>
<sequence length="229" mass="26445">MDSLDRSCQDWCDRKQHWLEIGPPDLVERKGSLTLRSHHKKYSKPVLVYSWHRDREAFPKGYDIEGPEKVKKLCNSTYRRLGTDESPIWTSETHEKLSQMCLNTEWVEMKSKALLNEETVSSGIIERVTGLPATGFGAVFPRHPPDWSKMCALTTYSEDYVPPYDYQPHAYPCQDDYSIVHRKCRSQFTDLNGSKRFGINTWHDESGIYANSDVKQKLYPLTSGPIVPI</sequence>
<comment type="function">
    <text evidence="5">Microtubule inner protein (MIP) part of the dynein-decorated doublet microtubules (DMTs) in cilia axoneme, which is required for motile cilia beating.</text>
</comment>
<comment type="subunit">
    <text evidence="1 4">Microtubule inner protein component of sperm flagellar doublet microtubules (By similarity). Interacts with MYH9 (PubMed:28345668). Interacts with MYH10 (PubMed:28345668).</text>
</comment>
<comment type="subcellular location">
    <subcellularLocation>
        <location evidence="5">Cytoplasm</location>
        <location evidence="5">Cytoskeleton</location>
        <location evidence="5">Cilium axoneme</location>
    </subcellularLocation>
    <subcellularLocation>
        <location evidence="1">Cytoplasm</location>
        <location evidence="1">Cytoskeleton</location>
        <location evidence="1">Flagellum axoneme</location>
    </subcellularLocation>
    <subcellularLocation>
        <location evidence="4">Cell membrane</location>
        <topology evidence="2">Single-pass membrane protein</topology>
    </subcellularLocation>
    <subcellularLocation>
        <location evidence="4">Cytoplasm</location>
    </subcellularLocation>
</comment>
<comment type="alternative products">
    <event type="alternative splicing"/>
    <isoform>
        <id>Q5VTT2-1</id>
        <name>1</name>
        <sequence type="displayed"/>
    </isoform>
    <isoform>
        <id>Q5VTT2-2</id>
        <name>2</name>
        <sequence type="described" ref="VSP_056887"/>
    </isoform>
</comment>
<comment type="tissue specificity">
    <text evidence="4 5">Expressed in undifferentiated embryonic stem cells. Expressed in airway epithelial cells (PubMed:36191189).</text>
</comment>
<comment type="induction">
    <text evidence="4">Down-regulated following embryonic stem cells differentiation.</text>
</comment>
<evidence type="ECO:0000250" key="1">
    <source>
        <dbReference type="UniProtKB" id="Q9CQC3"/>
    </source>
</evidence>
<evidence type="ECO:0000255" key="2"/>
<evidence type="ECO:0000269" key="3">
    <source>
    </source>
</evidence>
<evidence type="ECO:0000269" key="4">
    <source>
    </source>
</evidence>
<evidence type="ECO:0000269" key="5">
    <source>
    </source>
</evidence>
<evidence type="ECO:0000303" key="6">
    <source>
    </source>
</evidence>
<evidence type="ECO:0000305" key="7">
    <source>
    </source>
</evidence>
<evidence type="ECO:0000312" key="8">
    <source>
        <dbReference type="HGNC" id="HGNC:31422"/>
    </source>
</evidence>
<evidence type="ECO:0007744" key="9">
    <source>
        <dbReference type="PDB" id="7UNG"/>
    </source>
</evidence>
<feature type="chain" id="PRO_0000271063" description="Cilia- and flagella-associated protein 95">
    <location>
        <begin position="1"/>
        <end position="229"/>
    </location>
</feature>
<feature type="topological domain" description="Extracellular" evidence="2">
    <location>
        <begin position="1"/>
        <end position="123"/>
    </location>
</feature>
<feature type="transmembrane region" description="Helical" evidence="2">
    <location>
        <begin position="124"/>
        <end position="140"/>
    </location>
</feature>
<feature type="topological domain" description="Cytoplasmic" evidence="2">
    <location>
        <begin position="141"/>
        <end position="229"/>
    </location>
</feature>
<feature type="region of interest" description="Mn" evidence="7">
    <location>
        <begin position="153"/>
        <end position="163"/>
    </location>
</feature>
<feature type="glycosylation site" description="N-linked (GlcNAc...) asparagine" evidence="3">
    <location>
        <position position="75"/>
    </location>
</feature>
<feature type="splice variant" id="VSP_056887" description="In isoform 2." evidence="6">
    <original>CALTTYSEDYVPPYDYQPHAYPCQDDYSIVHRKCRSQFTDLNGSKRFGINTWHDESGIYANSDVKQKLYPLTSGPIVPI</original>
    <variation>LIPVKMIIP</variation>
    <location>
        <begin position="151"/>
        <end position="229"/>
    </location>
</feature>
<dbReference type="EMBL" id="AL591215">
    <property type="status" value="NOT_ANNOTATED_CDS"/>
    <property type="molecule type" value="Genomic_DNA"/>
</dbReference>
<dbReference type="EMBL" id="AL162412">
    <property type="status" value="NOT_ANNOTATED_CDS"/>
    <property type="molecule type" value="Genomic_DNA"/>
</dbReference>
<dbReference type="EMBL" id="AL603625">
    <property type="status" value="NOT_ANNOTATED_CDS"/>
    <property type="molecule type" value="Genomic_DNA"/>
</dbReference>
<dbReference type="EMBL" id="CH471089">
    <property type="protein sequence ID" value="EAW62492.1"/>
    <property type="molecule type" value="Genomic_DNA"/>
</dbReference>
<dbReference type="EMBL" id="BC136709">
    <property type="protein sequence ID" value="AAI36710.1"/>
    <property type="molecule type" value="mRNA"/>
</dbReference>
<dbReference type="EMBL" id="BC150564">
    <property type="protein sequence ID" value="AAI50565.1"/>
    <property type="molecule type" value="mRNA"/>
</dbReference>
<dbReference type="CCDS" id="CCDS35041.1">
    <molecule id="Q5VTT2-1"/>
</dbReference>
<dbReference type="CCDS" id="CCDS78403.1">
    <molecule id="Q5VTT2-2"/>
</dbReference>
<dbReference type="RefSeq" id="NP_001010940.1">
    <molecule id="Q5VTT2-1"/>
    <property type="nucleotide sequence ID" value="NM_001010940.3"/>
</dbReference>
<dbReference type="RefSeq" id="NP_001295013.1">
    <molecule id="Q5VTT2-2"/>
    <property type="nucleotide sequence ID" value="NM_001308084.2"/>
</dbReference>
<dbReference type="PDB" id="7UNG">
    <property type="method" value="EM"/>
    <property type="resolution" value="3.60 A"/>
    <property type="chains" value="0/7=1-229"/>
</dbReference>
<dbReference type="PDB" id="8J07">
    <property type="method" value="EM"/>
    <property type="resolution" value="4.10 A"/>
    <property type="chains" value="1V/1W=1-229"/>
</dbReference>
<dbReference type="PDBsum" id="7UNG"/>
<dbReference type="PDBsum" id="8J07"/>
<dbReference type="EMDB" id="EMD-26624"/>
<dbReference type="EMDB" id="EMD-35888"/>
<dbReference type="SMR" id="Q5VTT2"/>
<dbReference type="FunCoup" id="Q5VTT2">
    <property type="interactions" value="7"/>
</dbReference>
<dbReference type="IntAct" id="Q5VTT2">
    <property type="interactions" value="2"/>
</dbReference>
<dbReference type="MINT" id="Q5VTT2"/>
<dbReference type="STRING" id="9606.ENSP00000366402"/>
<dbReference type="GlyCosmos" id="Q5VTT2">
    <property type="glycosylation" value="1 site, No reported glycans"/>
</dbReference>
<dbReference type="GlyGen" id="Q5VTT2">
    <property type="glycosylation" value="1 site"/>
</dbReference>
<dbReference type="iPTMnet" id="Q5VTT2"/>
<dbReference type="PhosphoSitePlus" id="Q5VTT2"/>
<dbReference type="BioMuta" id="C9orf135"/>
<dbReference type="DMDM" id="74746987"/>
<dbReference type="MassIVE" id="Q5VTT2"/>
<dbReference type="PaxDb" id="9606-ENSP00000366402"/>
<dbReference type="PeptideAtlas" id="Q5VTT2"/>
<dbReference type="ProteomicsDB" id="1795"/>
<dbReference type="ProteomicsDB" id="65351">
    <molecule id="Q5VTT2-1"/>
</dbReference>
<dbReference type="Antibodypedia" id="12367">
    <property type="antibodies" value="26 antibodies from 10 providers"/>
</dbReference>
<dbReference type="DNASU" id="138255"/>
<dbReference type="Ensembl" id="ENST00000377197.8">
    <molecule id="Q5VTT2-1"/>
    <property type="protein sequence ID" value="ENSP00000366402.3"/>
    <property type="gene ID" value="ENSG00000204711.9"/>
</dbReference>
<dbReference type="Ensembl" id="ENST00000527647.5">
    <molecule id="Q5VTT2-2"/>
    <property type="protein sequence ID" value="ENSP00000431855.1"/>
    <property type="gene ID" value="ENSG00000204711.9"/>
</dbReference>
<dbReference type="GeneID" id="138255"/>
<dbReference type="KEGG" id="hsa:138255"/>
<dbReference type="MANE-Select" id="ENST00000377197.8">
    <property type="protein sequence ID" value="ENSP00000366402.3"/>
    <property type="RefSeq nucleotide sequence ID" value="NM_001010940.3"/>
    <property type="RefSeq protein sequence ID" value="NP_001010940.1"/>
</dbReference>
<dbReference type="UCSC" id="uc004ahl.4">
    <molecule id="Q5VTT2-1"/>
    <property type="organism name" value="human"/>
</dbReference>
<dbReference type="AGR" id="HGNC:31422"/>
<dbReference type="CTD" id="138255"/>
<dbReference type="DisGeNET" id="138255"/>
<dbReference type="GeneCards" id="CFAP95"/>
<dbReference type="HGNC" id="HGNC:31422">
    <property type="gene designation" value="CFAP95"/>
</dbReference>
<dbReference type="HPA" id="ENSG00000204711">
    <property type="expression patterns" value="Tissue enhanced (choroid plexus, fallopian tube, testis)"/>
</dbReference>
<dbReference type="neXtProt" id="NX_Q5VTT2"/>
<dbReference type="OpenTargets" id="ENSG00000204711"/>
<dbReference type="VEuPathDB" id="HostDB:ENSG00000204711"/>
<dbReference type="eggNOG" id="ENOG502R194">
    <property type="taxonomic scope" value="Eukaryota"/>
</dbReference>
<dbReference type="GeneTree" id="ENSGT00390000014593"/>
<dbReference type="HOGENOM" id="CLU_108076_0_0_1"/>
<dbReference type="InParanoid" id="Q5VTT2"/>
<dbReference type="OMA" id="DWCSSRQ"/>
<dbReference type="OrthoDB" id="309575at2759"/>
<dbReference type="PAN-GO" id="Q5VTT2">
    <property type="GO annotations" value="1 GO annotation based on evolutionary models"/>
</dbReference>
<dbReference type="PhylomeDB" id="Q5VTT2"/>
<dbReference type="TreeFam" id="TF328471"/>
<dbReference type="PathwayCommons" id="Q5VTT2"/>
<dbReference type="SignaLink" id="Q5VTT2"/>
<dbReference type="BioGRID-ORCS" id="138255">
    <property type="hits" value="6 hits in 1140 CRISPR screens"/>
</dbReference>
<dbReference type="ChiTaRS" id="C9orf135">
    <property type="organism name" value="human"/>
</dbReference>
<dbReference type="GenomeRNAi" id="138255"/>
<dbReference type="Pharos" id="Q5VTT2">
    <property type="development level" value="Tdark"/>
</dbReference>
<dbReference type="PRO" id="PR:Q5VTT2"/>
<dbReference type="Proteomes" id="UP000005640">
    <property type="component" value="Chromosome 9"/>
</dbReference>
<dbReference type="RNAct" id="Q5VTT2">
    <property type="molecule type" value="protein"/>
</dbReference>
<dbReference type="Bgee" id="ENSG00000204711">
    <property type="expression patterns" value="Expressed in bronchial epithelial cell and 119 other cell types or tissues"/>
</dbReference>
<dbReference type="ExpressionAtlas" id="Q5VTT2">
    <property type="expression patterns" value="baseline and differential"/>
</dbReference>
<dbReference type="GO" id="GO:0160111">
    <property type="term" value="C:axonemal A tubule inner sheath"/>
    <property type="evidence" value="ECO:0000250"/>
    <property type="project" value="UniProtKB"/>
</dbReference>
<dbReference type="GO" id="GO:0005879">
    <property type="term" value="C:axonemal microtubule"/>
    <property type="evidence" value="ECO:0000314"/>
    <property type="project" value="UniProtKB"/>
</dbReference>
<dbReference type="GO" id="GO:0005737">
    <property type="term" value="C:cytoplasm"/>
    <property type="evidence" value="ECO:0000314"/>
    <property type="project" value="UniProtKB"/>
</dbReference>
<dbReference type="GO" id="GO:0005886">
    <property type="term" value="C:plasma membrane"/>
    <property type="evidence" value="ECO:0000314"/>
    <property type="project" value="UniProtKB"/>
</dbReference>
<dbReference type="GO" id="GO:0036126">
    <property type="term" value="C:sperm flagellum"/>
    <property type="evidence" value="ECO:0000250"/>
    <property type="project" value="UniProtKB"/>
</dbReference>
<dbReference type="GO" id="GO:0030317">
    <property type="term" value="P:flagellated sperm motility"/>
    <property type="evidence" value="ECO:0000250"/>
    <property type="project" value="UniProtKB"/>
</dbReference>
<dbReference type="InterPro" id="IPR027905">
    <property type="entry name" value="CFAP95"/>
</dbReference>
<dbReference type="PANTHER" id="PTHR35069:SF1">
    <property type="entry name" value="CILIA- AND FLAGELLA-ASSOCIATED PROTEIN 95"/>
    <property type="match status" value="1"/>
</dbReference>
<dbReference type="PANTHER" id="PTHR35069">
    <property type="entry name" value="PROTEIN C9ORF135"/>
    <property type="match status" value="1"/>
</dbReference>
<dbReference type="Pfam" id="PF15139">
    <property type="entry name" value="CFAP95"/>
    <property type="match status" value="1"/>
</dbReference>
<gene>
    <name evidence="8" type="primary">CFAP95</name>
    <name evidence="8" type="synonym">C9orf135</name>
</gene>
<organism>
    <name type="scientific">Homo sapiens</name>
    <name type="common">Human</name>
    <dbReference type="NCBI Taxonomy" id="9606"/>
    <lineage>
        <taxon>Eukaryota</taxon>
        <taxon>Metazoa</taxon>
        <taxon>Chordata</taxon>
        <taxon>Craniata</taxon>
        <taxon>Vertebrata</taxon>
        <taxon>Euteleostomi</taxon>
        <taxon>Mammalia</taxon>
        <taxon>Eutheria</taxon>
        <taxon>Euarchontoglires</taxon>
        <taxon>Primates</taxon>
        <taxon>Haplorrhini</taxon>
        <taxon>Catarrhini</taxon>
        <taxon>Hominidae</taxon>
        <taxon>Homo</taxon>
    </lineage>
</organism>
<name>CFA95_HUMAN</name>
<accession>Q5VTT2</accession>
<accession>A7E2U4</accession>
<accession>B2RN61</accession>